<gene>
    <name type="primary">AP3M</name>
    <name type="synonym">ZIP4</name>
    <name type="ordered locus">At1g56590</name>
    <name type="ORF">F25P12.96</name>
</gene>
<protein>
    <recommendedName>
        <fullName>AP-3 complex subunit mu</fullName>
    </recommendedName>
    <alternativeName>
        <fullName>Adaptor protein complex AP-3 subunit mu</fullName>
    </alternativeName>
    <alternativeName>
        <fullName>Adaptor protein-3 mu-adaptin</fullName>
    </alternativeName>
    <alternativeName>
        <fullName>Adaptor-related protein complex 3 subunit mu</fullName>
    </alternativeName>
    <alternativeName>
        <fullName>At-muD-Ad</fullName>
    </alternativeName>
    <alternativeName>
        <fullName>Mu3-adaptin</fullName>
    </alternativeName>
    <alternativeName>
        <fullName>Protein ZIG SUPPRESSOR 4</fullName>
    </alternativeName>
</protein>
<comment type="function">
    <text evidence="4">Part of the AP-3 complex, an adaptor-related complex which seems to be clathrin-associated. The complex is associated with the Golgi region as well as more peripheral structures. It facilitates the budding of vesicles from the Golgi membrane and may be directly involved in trafficking to the vacuole. It also functions in maintaining the identity of lytic vacuoles and in regulating the transition between storage and lytic vacuoles.</text>
</comment>
<comment type="subunit">
    <text>Adaptor protein complex 3 (AP-3) is a heterotetramer composed of two large adaptins (delta-type subunit and beta-type subunit), a medium adaptin (mu-type subunit) and a small adaptin (sigma-type subunit).</text>
</comment>
<comment type="interaction">
    <interactant intactId="EBI-25519891">
        <id>F4I562</id>
    </interactant>
    <interactant intactId="EBI-4426557">
        <id>Q84MB2</id>
        <label>TIFY8</label>
    </interactant>
    <organismsDiffer>false</organismsDiffer>
    <experiments>3</experiments>
</comment>
<comment type="subcellular location">
    <subcellularLocation>
        <location evidence="1">Cytoplasm</location>
    </subcellularLocation>
    <subcellularLocation>
        <location>Golgi apparatus</location>
    </subcellularLocation>
    <subcellularLocation>
        <location evidence="1">Cytoplasmic vesicle membrane</location>
        <topology evidence="1">Peripheral membrane protein</topology>
        <orientation evidence="1">Cytoplasmic side</orientation>
    </subcellularLocation>
    <text evidence="1">Component of the coat surrounding the cytoplasmic face of coated vesicles located at the Golgi complex.</text>
</comment>
<comment type="disruption phenotype">
    <text evidence="3">Slightly reduced gravitropic response.</text>
</comment>
<comment type="similarity">
    <text evidence="5">Belongs to the adaptor complexes medium subunit family.</text>
</comment>
<comment type="sequence caution" evidence="5">
    <conflict type="erroneous gene model prediction">
        <sequence resource="EMBL-CDS" id="AAG09104"/>
    </conflict>
</comment>
<evidence type="ECO:0000250" key="1"/>
<evidence type="ECO:0000255" key="2">
    <source>
        <dbReference type="PROSITE-ProRule" id="PRU00404"/>
    </source>
</evidence>
<evidence type="ECO:0000269" key="3">
    <source>
    </source>
</evidence>
<evidence type="ECO:0000269" key="4">
    <source>
    </source>
</evidence>
<evidence type="ECO:0000305" key="5"/>
<reference key="1">
    <citation type="journal article" date="2000" name="Nature">
        <title>Sequence and analysis of chromosome 1 of the plant Arabidopsis thaliana.</title>
        <authorList>
            <person name="Theologis A."/>
            <person name="Ecker J.R."/>
            <person name="Palm C.J."/>
            <person name="Federspiel N.A."/>
            <person name="Kaul S."/>
            <person name="White O."/>
            <person name="Alonso J."/>
            <person name="Altafi H."/>
            <person name="Araujo R."/>
            <person name="Bowman C.L."/>
            <person name="Brooks S.Y."/>
            <person name="Buehler E."/>
            <person name="Chan A."/>
            <person name="Chao Q."/>
            <person name="Chen H."/>
            <person name="Cheuk R.F."/>
            <person name="Chin C.W."/>
            <person name="Chung M.K."/>
            <person name="Conn L."/>
            <person name="Conway A.B."/>
            <person name="Conway A.R."/>
            <person name="Creasy T.H."/>
            <person name="Dewar K."/>
            <person name="Dunn P."/>
            <person name="Etgu P."/>
            <person name="Feldblyum T.V."/>
            <person name="Feng J.-D."/>
            <person name="Fong B."/>
            <person name="Fujii C.Y."/>
            <person name="Gill J.E."/>
            <person name="Goldsmith A.D."/>
            <person name="Haas B."/>
            <person name="Hansen N.F."/>
            <person name="Hughes B."/>
            <person name="Huizar L."/>
            <person name="Hunter J.L."/>
            <person name="Jenkins J."/>
            <person name="Johnson-Hopson C."/>
            <person name="Khan S."/>
            <person name="Khaykin E."/>
            <person name="Kim C.J."/>
            <person name="Koo H.L."/>
            <person name="Kremenetskaia I."/>
            <person name="Kurtz D.B."/>
            <person name="Kwan A."/>
            <person name="Lam B."/>
            <person name="Langin-Hooper S."/>
            <person name="Lee A."/>
            <person name="Lee J.M."/>
            <person name="Lenz C.A."/>
            <person name="Li J.H."/>
            <person name="Li Y.-P."/>
            <person name="Lin X."/>
            <person name="Liu S.X."/>
            <person name="Liu Z.A."/>
            <person name="Luros J.S."/>
            <person name="Maiti R."/>
            <person name="Marziali A."/>
            <person name="Militscher J."/>
            <person name="Miranda M."/>
            <person name="Nguyen M."/>
            <person name="Nierman W.C."/>
            <person name="Osborne B.I."/>
            <person name="Pai G."/>
            <person name="Peterson J."/>
            <person name="Pham P.K."/>
            <person name="Rizzo M."/>
            <person name="Rooney T."/>
            <person name="Rowley D."/>
            <person name="Sakano H."/>
            <person name="Salzberg S.L."/>
            <person name="Schwartz J.R."/>
            <person name="Shinn P."/>
            <person name="Southwick A.M."/>
            <person name="Sun H."/>
            <person name="Tallon L.J."/>
            <person name="Tambunga G."/>
            <person name="Toriumi M.J."/>
            <person name="Town C.D."/>
            <person name="Utterback T."/>
            <person name="Van Aken S."/>
            <person name="Vaysberg M."/>
            <person name="Vysotskaia V.S."/>
            <person name="Walker M."/>
            <person name="Wu D."/>
            <person name="Yu G."/>
            <person name="Fraser C.M."/>
            <person name="Venter J.C."/>
            <person name="Davis R.W."/>
        </authorList>
    </citation>
    <scope>NUCLEOTIDE SEQUENCE [LARGE SCALE GENOMIC DNA]</scope>
    <source>
        <strain>cv. Columbia</strain>
    </source>
</reference>
<reference key="2">
    <citation type="journal article" date="2017" name="Plant J.">
        <title>Araport11: a complete reannotation of the Arabidopsis thaliana reference genome.</title>
        <authorList>
            <person name="Cheng C.Y."/>
            <person name="Krishnakumar V."/>
            <person name="Chan A.P."/>
            <person name="Thibaud-Nissen F."/>
            <person name="Schobel S."/>
            <person name="Town C.D."/>
        </authorList>
    </citation>
    <scope>GENOME REANNOTATION</scope>
    <source>
        <strain>cv. Columbia</strain>
    </source>
</reference>
<reference key="3">
    <citation type="journal article" date="2004" name="Genome Res.">
        <title>Whole genome sequence comparisons and 'full-length' cDNA sequences: a combined approach to evaluate and improve Arabidopsis genome annotation.</title>
        <authorList>
            <person name="Castelli V."/>
            <person name="Aury J.-M."/>
            <person name="Jaillon O."/>
            <person name="Wincker P."/>
            <person name="Clepet C."/>
            <person name="Menard M."/>
            <person name="Cruaud C."/>
            <person name="Quetier F."/>
            <person name="Scarpelli C."/>
            <person name="Schaechter V."/>
            <person name="Temple G."/>
            <person name="Caboche M."/>
            <person name="Weissenbach J."/>
            <person name="Salanoubat M."/>
        </authorList>
    </citation>
    <scope>NUCLEOTIDE SEQUENCE [LARGE SCALE MRNA]</scope>
    <source>
        <strain>cv. Columbia</strain>
    </source>
</reference>
<reference key="4">
    <citation type="submission" date="2004-09" db="EMBL/GenBank/DDBJ databases">
        <authorList>
            <person name="Wrobel R.L."/>
            <person name="Kimball T.L."/>
            <person name="Riters M.A."/>
            <person name="Steffen E."/>
            <person name="Thao S."/>
            <person name="Aceti D.J."/>
            <person name="Blommel P.G."/>
            <person name="Newman C.S."/>
            <person name="Zhao Q."/>
            <person name="Fox B.G."/>
            <person name="Phillips G.N. Jr."/>
            <person name="Markley J.L."/>
        </authorList>
    </citation>
    <scope>NUCLEOTIDE SEQUENCE [LARGE SCALE MRNA] OF 2-415</scope>
</reference>
<reference key="5">
    <citation type="journal article" date="2001" name="Mol. Biol. Cell">
        <title>Adaptins: the final recount.</title>
        <authorList>
            <person name="Boehm M."/>
            <person name="Bonifacino J.S."/>
        </authorList>
    </citation>
    <scope>GENE FAMILY</scope>
    <scope>REVIEW</scope>
</reference>
<reference key="6">
    <citation type="journal article" date="2004" name="Plant J.">
        <title>Arabidopsis muA-adaptin interacts with the tyrosine motif of the vacuolar sorting receptor VSR-PS1.</title>
        <authorList>
            <person name="Happel N."/>
            <person name="Hoening S."/>
            <person name="Neuhaus J.M."/>
            <person name="Paris N."/>
            <person name="Robinson D.G."/>
            <person name="Holstein S.E."/>
        </authorList>
    </citation>
    <scope>GENE FAMILY</scope>
</reference>
<reference key="7">
    <citation type="journal article" date="2009" name="Plant Cell Physiol.">
        <title>ZIP genes encode proteins involved in membrane trafficking of the TGN-PVC/vacuoles.</title>
        <authorList>
            <person name="Niihama M."/>
            <person name="Takemoto N."/>
            <person name="Hashiguchi Y."/>
            <person name="Tasaka M."/>
            <person name="Morita M.T."/>
        </authorList>
    </citation>
    <scope>DISRUPTION PHENOTYPE</scope>
    <scope>MUTANT ZIP4</scope>
</reference>
<reference key="8">
    <citation type="journal article" date="2011" name="Cell Res.">
        <title>The AP-3 adaptor complex is required for vacuolar function in Arabidopsis.</title>
        <authorList>
            <person name="Zwiewka M."/>
            <person name="Feraru E."/>
            <person name="Moeller B."/>
            <person name="Hwang I."/>
            <person name="Feraru M.I."/>
            <person name="Kleine-Vehn J."/>
            <person name="Weijers D."/>
            <person name="Friml J."/>
        </authorList>
    </citation>
    <scope>MUTAGENESIS OF 398-LEU--LEU-415</scope>
    <scope>FUNCTION</scope>
    <scope>COMPONENT OF THE AP-3 COMPLEX</scope>
</reference>
<reference key="9">
    <citation type="journal article" date="2012" name="Plant Cell">
        <title>Routes to the tonoplast: the sorting of tonoplast transporters in Arabidopsis mesophyll protoplasts.</title>
        <authorList>
            <person name="Wolfenstetter S."/>
            <person name="Wirsching P."/>
            <person name="Dotzauer D."/>
            <person name="Schneider S."/>
            <person name="Sauer N."/>
        </authorList>
    </citation>
    <scope>REVIEW</scope>
</reference>
<feature type="chain" id="PRO_0000424263" description="AP-3 complex subunit mu">
    <location>
        <begin position="1"/>
        <end position="415"/>
    </location>
</feature>
<feature type="domain" description="MHD" evidence="2">
    <location>
        <begin position="178"/>
        <end position="414"/>
    </location>
</feature>
<feature type="mutagenesis site" description="Affects vacuolar morphology; defective lytic vacuoles with altered morphology and accumulation of proteins." evidence="4">
    <location>
        <begin position="398"/>
        <end position="415"/>
    </location>
</feature>
<organism>
    <name type="scientific">Arabidopsis thaliana</name>
    <name type="common">Mouse-ear cress</name>
    <dbReference type="NCBI Taxonomy" id="3702"/>
    <lineage>
        <taxon>Eukaryota</taxon>
        <taxon>Viridiplantae</taxon>
        <taxon>Streptophyta</taxon>
        <taxon>Embryophyta</taxon>
        <taxon>Tracheophyta</taxon>
        <taxon>Spermatophyta</taxon>
        <taxon>Magnoliopsida</taxon>
        <taxon>eudicotyledons</taxon>
        <taxon>Gunneridae</taxon>
        <taxon>Pentapetalae</taxon>
        <taxon>rosids</taxon>
        <taxon>malvids</taxon>
        <taxon>Brassicales</taxon>
        <taxon>Brassicaceae</taxon>
        <taxon>Camelineae</taxon>
        <taxon>Arabidopsis</taxon>
    </lineage>
</organism>
<proteinExistence type="evidence at protein level"/>
<name>AP3M_ARATH</name>
<sequence>MLQCIFLISDSGEVMLEKQLTGHRVDRSICAWFWDQYISQGDSFKALPVIASPTHYLFQIVRDGITFLACSQVEMPPLMAIEFLCRVADVLSEYLGGLNEDLIKDNFIIVYELLDEMIDNGFPLTTEPSILKEMIAPPNLVSKMLSVVTGNASNVSDTLPSGAGSCVPWRPTDPKYSSNEVYVDLVEEMDAIVNRDGELVKCEIYGEVQMNSQLTGFPDLTLSFANPSILEDMRFHPCVRYRPWESHQVLSFVPPDGEFKLMSYRVKKLKNTPVYVKPQITSDSGTCRISVLVGIRSDPGKTIESITLSFQLPHCVSSADLSSNHGTVTILSNKTCTWTIGRIPKDKTPCLSGTLALEPGLERLHVFPTFKLGFKIMGIALSGLRIEKLDLQTIPPRLYKGFRAQTRAGEFDVRL</sequence>
<dbReference type="EMBL" id="AC009323">
    <property type="protein sequence ID" value="AAG09104.1"/>
    <property type="status" value="ALT_SEQ"/>
    <property type="molecule type" value="Genomic_DNA"/>
</dbReference>
<dbReference type="EMBL" id="CP002684">
    <property type="protein sequence ID" value="AEE33412.1"/>
    <property type="molecule type" value="Genomic_DNA"/>
</dbReference>
<dbReference type="EMBL" id="BX814222">
    <property type="status" value="NOT_ANNOTATED_CDS"/>
    <property type="molecule type" value="mRNA"/>
</dbReference>
<dbReference type="EMBL" id="BT015502">
    <property type="status" value="NOT_ANNOTATED_CDS"/>
    <property type="molecule type" value="mRNA"/>
</dbReference>
<dbReference type="PIR" id="F96607">
    <property type="entry name" value="F96607"/>
</dbReference>
<dbReference type="RefSeq" id="NP_176052.3">
    <property type="nucleotide sequence ID" value="NM_104536.5"/>
</dbReference>
<dbReference type="SMR" id="F4I562"/>
<dbReference type="BioGRID" id="27338">
    <property type="interactions" value="4"/>
</dbReference>
<dbReference type="FunCoup" id="F4I562">
    <property type="interactions" value="4004"/>
</dbReference>
<dbReference type="IntAct" id="F4I562">
    <property type="interactions" value="1"/>
</dbReference>
<dbReference type="STRING" id="3702.F4I562"/>
<dbReference type="PaxDb" id="3702-AT1G56590.1"/>
<dbReference type="ProteomicsDB" id="244407"/>
<dbReference type="DNASU" id="842113"/>
<dbReference type="EnsemblPlants" id="AT1G56590.1">
    <property type="protein sequence ID" value="AT1G56590.1"/>
    <property type="gene ID" value="AT1G56590"/>
</dbReference>
<dbReference type="GeneID" id="842113"/>
<dbReference type="Gramene" id="AT1G56590.1">
    <property type="protein sequence ID" value="AT1G56590.1"/>
    <property type="gene ID" value="AT1G56590"/>
</dbReference>
<dbReference type="KEGG" id="ath:AT1G56590"/>
<dbReference type="Araport" id="AT1G56590"/>
<dbReference type="TAIR" id="AT1G56590">
    <property type="gene designation" value="ZIP4"/>
</dbReference>
<dbReference type="eggNOG" id="KOG2740">
    <property type="taxonomic scope" value="Eukaryota"/>
</dbReference>
<dbReference type="HOGENOM" id="CLU_026996_6_2_1"/>
<dbReference type="InParanoid" id="F4I562"/>
<dbReference type="OMA" id="INVHFTI"/>
<dbReference type="PRO" id="PR:F4I562"/>
<dbReference type="Proteomes" id="UP000006548">
    <property type="component" value="Chromosome 1"/>
</dbReference>
<dbReference type="ExpressionAtlas" id="F4I562">
    <property type="expression patterns" value="baseline and differential"/>
</dbReference>
<dbReference type="GO" id="GO:0030131">
    <property type="term" value="C:clathrin adaptor complex"/>
    <property type="evidence" value="ECO:0007669"/>
    <property type="project" value="InterPro"/>
</dbReference>
<dbReference type="GO" id="GO:0030659">
    <property type="term" value="C:cytoplasmic vesicle membrane"/>
    <property type="evidence" value="ECO:0007669"/>
    <property type="project" value="UniProtKB-SubCell"/>
</dbReference>
<dbReference type="GO" id="GO:0005794">
    <property type="term" value="C:Golgi apparatus"/>
    <property type="evidence" value="ECO:0007669"/>
    <property type="project" value="UniProtKB-SubCell"/>
</dbReference>
<dbReference type="GO" id="GO:0009630">
    <property type="term" value="P:gravitropism"/>
    <property type="evidence" value="ECO:0000315"/>
    <property type="project" value="TAIR"/>
</dbReference>
<dbReference type="GO" id="GO:0006886">
    <property type="term" value="P:intracellular protein transport"/>
    <property type="evidence" value="ECO:0007669"/>
    <property type="project" value="InterPro"/>
</dbReference>
<dbReference type="GO" id="GO:0016192">
    <property type="term" value="P:vesicle-mediated transport"/>
    <property type="evidence" value="ECO:0007669"/>
    <property type="project" value="InterPro"/>
</dbReference>
<dbReference type="CDD" id="cd09252">
    <property type="entry name" value="AP-3_Mu3_Cterm"/>
    <property type="match status" value="1"/>
</dbReference>
<dbReference type="CDD" id="cd14837">
    <property type="entry name" value="AP3_Mu_N"/>
    <property type="match status" value="1"/>
</dbReference>
<dbReference type="FunFam" id="3.30.450.60:FF:000002">
    <property type="entry name" value="AP-2 complex subunit mu, putative"/>
    <property type="match status" value="1"/>
</dbReference>
<dbReference type="Gene3D" id="3.30.450.60">
    <property type="match status" value="1"/>
</dbReference>
<dbReference type="Gene3D" id="2.60.40.1170">
    <property type="entry name" value="Mu homology domain, subdomain B"/>
    <property type="match status" value="2"/>
</dbReference>
<dbReference type="InterPro" id="IPR050431">
    <property type="entry name" value="Adaptor_comp_med_subunit"/>
</dbReference>
<dbReference type="InterPro" id="IPR036168">
    <property type="entry name" value="AP2_Mu_C_sf"/>
</dbReference>
<dbReference type="InterPro" id="IPR001392">
    <property type="entry name" value="Clathrin_mu"/>
</dbReference>
<dbReference type="InterPro" id="IPR018240">
    <property type="entry name" value="Clathrin_mu_CS"/>
</dbReference>
<dbReference type="InterPro" id="IPR011012">
    <property type="entry name" value="Longin-like_dom_sf"/>
</dbReference>
<dbReference type="InterPro" id="IPR028565">
    <property type="entry name" value="MHD"/>
</dbReference>
<dbReference type="PANTHER" id="PTHR10529">
    <property type="entry name" value="AP COMPLEX SUBUNIT MU"/>
    <property type="match status" value="1"/>
</dbReference>
<dbReference type="Pfam" id="PF00928">
    <property type="entry name" value="Adap_comp_sub"/>
    <property type="match status" value="1"/>
</dbReference>
<dbReference type="PIRSF" id="PIRSF005992">
    <property type="entry name" value="Clathrin_mu"/>
    <property type="match status" value="1"/>
</dbReference>
<dbReference type="PRINTS" id="PR00314">
    <property type="entry name" value="CLATHRINADPT"/>
</dbReference>
<dbReference type="SUPFAM" id="SSF49447">
    <property type="entry name" value="Second domain of Mu2 adaptin subunit (ap50) of ap2 adaptor"/>
    <property type="match status" value="1"/>
</dbReference>
<dbReference type="SUPFAM" id="SSF64356">
    <property type="entry name" value="SNARE-like"/>
    <property type="match status" value="1"/>
</dbReference>
<dbReference type="PROSITE" id="PS00990">
    <property type="entry name" value="CLAT_ADAPTOR_M_1"/>
    <property type="match status" value="1"/>
</dbReference>
<dbReference type="PROSITE" id="PS51072">
    <property type="entry name" value="MHD"/>
    <property type="match status" value="1"/>
</dbReference>
<accession>F4I562</accession>
<accession>Q9FXB1</accession>
<keyword id="KW-0963">Cytoplasm</keyword>
<keyword id="KW-0968">Cytoplasmic vesicle</keyword>
<keyword id="KW-0333">Golgi apparatus</keyword>
<keyword id="KW-0472">Membrane</keyword>
<keyword id="KW-0653">Protein transport</keyword>
<keyword id="KW-1185">Reference proteome</keyword>
<keyword id="KW-0813">Transport</keyword>